<organism>
    <name type="scientific">Salmonella heidelberg (strain SL476)</name>
    <dbReference type="NCBI Taxonomy" id="454169"/>
    <lineage>
        <taxon>Bacteria</taxon>
        <taxon>Pseudomonadati</taxon>
        <taxon>Pseudomonadota</taxon>
        <taxon>Gammaproteobacteria</taxon>
        <taxon>Enterobacterales</taxon>
        <taxon>Enterobacteriaceae</taxon>
        <taxon>Salmonella</taxon>
    </lineage>
</organism>
<comment type="function">
    <text evidence="1">Catalyzes the reversible retro-aldol cleavage of both 5-keto-4-deoxy-D-glucarate and 2-keto-3-deoxy-D-glucarate to pyruvate and tartronic semialdehyde.</text>
</comment>
<comment type="catalytic activity">
    <reaction evidence="1">
        <text>5-dehydro-4-deoxy-D-glucarate = 2-hydroxy-3-oxopropanoate + pyruvate</text>
        <dbReference type="Rhea" id="RHEA:27726"/>
        <dbReference type="ChEBI" id="CHEBI:15361"/>
        <dbReference type="ChEBI" id="CHEBI:42819"/>
        <dbReference type="ChEBI" id="CHEBI:57978"/>
    </reaction>
</comment>
<comment type="catalytic activity">
    <reaction evidence="1">
        <text>2-dehydro-3-deoxy-D-glucarate = 2-hydroxy-3-oxopropanoate + pyruvate</text>
        <dbReference type="Rhea" id="RHEA:10268"/>
        <dbReference type="ChEBI" id="CHEBI:15361"/>
        <dbReference type="ChEBI" id="CHEBI:57978"/>
        <dbReference type="ChEBI" id="CHEBI:58098"/>
        <dbReference type="EC" id="4.1.2.20"/>
    </reaction>
</comment>
<comment type="cofactor">
    <cofactor evidence="1">
        <name>Mg(2+)</name>
        <dbReference type="ChEBI" id="CHEBI:18420"/>
    </cofactor>
    <text evidence="1">Binds 1 Mg(2+) ion per subunit.</text>
</comment>
<comment type="pathway">
    <text evidence="1">Carbohydrate acid metabolism; galactarate degradation; D-glycerate from galactarate: step 2/3.</text>
</comment>
<comment type="subunit">
    <text evidence="1">Homohexamer; trimer of dimers.</text>
</comment>
<comment type="similarity">
    <text evidence="1">Belongs to the HpcH/HpaI aldolase family. KDGluc aldolase subfamily.</text>
</comment>
<feature type="chain" id="PRO_1000140415" description="5-keto-4-deoxy-D-glucarate aldolase">
    <location>
        <begin position="1"/>
        <end position="256"/>
    </location>
</feature>
<feature type="active site" description="Proton acceptor" evidence="1">
    <location>
        <position position="50"/>
    </location>
</feature>
<feature type="binding site" evidence="1">
    <location>
        <position position="151"/>
    </location>
    <ligand>
        <name>substrate</name>
    </ligand>
</feature>
<feature type="binding site" evidence="1">
    <location>
        <position position="153"/>
    </location>
    <ligand>
        <name>Mg(2+)</name>
        <dbReference type="ChEBI" id="CHEBI:18420"/>
    </ligand>
</feature>
<feature type="binding site" evidence="1">
    <location>
        <position position="178"/>
    </location>
    <ligand>
        <name>substrate</name>
    </ligand>
</feature>
<feature type="binding site" evidence="1">
    <location>
        <position position="179"/>
    </location>
    <ligand>
        <name>Mg(2+)</name>
        <dbReference type="ChEBI" id="CHEBI:18420"/>
    </ligand>
</feature>
<feature type="binding site" evidence="1">
    <location>
        <position position="179"/>
    </location>
    <ligand>
        <name>substrate</name>
    </ligand>
</feature>
<feature type="site" description="Transition state stabilizer" evidence="1">
    <location>
        <position position="75"/>
    </location>
</feature>
<feature type="site" description="Increases basicity of active site His" evidence="1">
    <location>
        <position position="89"/>
    </location>
</feature>
<evidence type="ECO:0000255" key="1">
    <source>
        <dbReference type="HAMAP-Rule" id="MF_01291"/>
    </source>
</evidence>
<dbReference type="EC" id="4.1.2.20" evidence="1"/>
<dbReference type="EMBL" id="CP001120">
    <property type="protein sequence ID" value="ACF69547.1"/>
    <property type="molecule type" value="Genomic_DNA"/>
</dbReference>
<dbReference type="RefSeq" id="WP_001057715.1">
    <property type="nucleotide sequence ID" value="NC_011083.1"/>
</dbReference>
<dbReference type="SMR" id="B4TIX5"/>
<dbReference type="KEGG" id="seh:SeHA_C3547"/>
<dbReference type="HOGENOM" id="CLU_059964_1_0_6"/>
<dbReference type="UniPathway" id="UPA00565">
    <property type="reaction ID" value="UER00630"/>
</dbReference>
<dbReference type="Proteomes" id="UP000001866">
    <property type="component" value="Chromosome"/>
</dbReference>
<dbReference type="GO" id="GO:0005737">
    <property type="term" value="C:cytoplasm"/>
    <property type="evidence" value="ECO:0007669"/>
    <property type="project" value="TreeGrafter"/>
</dbReference>
<dbReference type="GO" id="GO:0008672">
    <property type="term" value="F:2-dehydro-3-deoxyglucarate aldolase activity"/>
    <property type="evidence" value="ECO:0007669"/>
    <property type="project" value="UniProtKB-UniRule"/>
</dbReference>
<dbReference type="GO" id="GO:0000287">
    <property type="term" value="F:magnesium ion binding"/>
    <property type="evidence" value="ECO:0007669"/>
    <property type="project" value="UniProtKB-UniRule"/>
</dbReference>
<dbReference type="GO" id="GO:0042838">
    <property type="term" value="P:D-glucarate catabolic process"/>
    <property type="evidence" value="ECO:0007669"/>
    <property type="project" value="UniProtKB-UniRule"/>
</dbReference>
<dbReference type="GO" id="GO:0046392">
    <property type="term" value="P:galactarate catabolic process"/>
    <property type="evidence" value="ECO:0007669"/>
    <property type="project" value="UniProtKB-UniRule"/>
</dbReference>
<dbReference type="FunFam" id="3.20.20.60:FF:000004">
    <property type="entry name" value="5-keto-4-deoxy-D-glucarate aldolase"/>
    <property type="match status" value="1"/>
</dbReference>
<dbReference type="Gene3D" id="3.20.20.60">
    <property type="entry name" value="Phosphoenolpyruvate-binding domains"/>
    <property type="match status" value="1"/>
</dbReference>
<dbReference type="HAMAP" id="MF_01291">
    <property type="entry name" value="KDGluc_aldolase"/>
    <property type="match status" value="1"/>
</dbReference>
<dbReference type="InterPro" id="IPR005000">
    <property type="entry name" value="Aldolase/citrate-lyase_domain"/>
</dbReference>
<dbReference type="InterPro" id="IPR017648">
    <property type="entry name" value="GarL"/>
</dbReference>
<dbReference type="InterPro" id="IPR050251">
    <property type="entry name" value="HpcH-HpaI_aldolase"/>
</dbReference>
<dbReference type="InterPro" id="IPR015813">
    <property type="entry name" value="Pyrv/PenolPyrv_kinase-like_dom"/>
</dbReference>
<dbReference type="InterPro" id="IPR040442">
    <property type="entry name" value="Pyrv_kinase-like_dom_sf"/>
</dbReference>
<dbReference type="NCBIfam" id="TIGR03239">
    <property type="entry name" value="GarL"/>
    <property type="match status" value="1"/>
</dbReference>
<dbReference type="NCBIfam" id="NF007849">
    <property type="entry name" value="PRK10558.1"/>
    <property type="match status" value="1"/>
</dbReference>
<dbReference type="PANTHER" id="PTHR30502">
    <property type="entry name" value="2-KETO-3-DEOXY-L-RHAMNONATE ALDOLASE"/>
    <property type="match status" value="1"/>
</dbReference>
<dbReference type="PANTHER" id="PTHR30502:SF4">
    <property type="entry name" value="5-KETO-4-DEOXY-D-GLUCARATE ALDOLASE"/>
    <property type="match status" value="1"/>
</dbReference>
<dbReference type="Pfam" id="PF03328">
    <property type="entry name" value="HpcH_HpaI"/>
    <property type="match status" value="1"/>
</dbReference>
<dbReference type="SUPFAM" id="SSF51621">
    <property type="entry name" value="Phosphoenolpyruvate/pyruvate domain"/>
    <property type="match status" value="1"/>
</dbReference>
<name>GARL_SALHS</name>
<sequence length="256" mass="27321">MNNAIFPNKFKAALAAQQVQIGCWSALASPITTEVLGLAGFDWLVLDGEHAPNDVTTLIPQLMALKGSASAPVVRVPTNEPVIIKRMLDIGFYNFLIPFVETQEEAARAVASTRYPPEGIRGVSVSHRANMFGTVPDYFAQSNKNITIIVQIESQLGVDNVDAIAATEGVDGIFVGPSDLAAALGHLGNASHPDVQQTIQHIFARAKAHGKPCGILAPVEADARRYLEWGATFVAVGSDLGAFRASTQKLADTFKK</sequence>
<gene>
    <name evidence="1" type="primary">garL</name>
    <name type="ordered locus">SeHA_C3547</name>
</gene>
<reference key="1">
    <citation type="journal article" date="2011" name="J. Bacteriol.">
        <title>Comparative genomics of 28 Salmonella enterica isolates: evidence for CRISPR-mediated adaptive sublineage evolution.</title>
        <authorList>
            <person name="Fricke W.F."/>
            <person name="Mammel M.K."/>
            <person name="McDermott P.F."/>
            <person name="Tartera C."/>
            <person name="White D.G."/>
            <person name="Leclerc J.E."/>
            <person name="Ravel J."/>
            <person name="Cebula T.A."/>
        </authorList>
    </citation>
    <scope>NUCLEOTIDE SEQUENCE [LARGE SCALE GENOMIC DNA]</scope>
    <source>
        <strain>SL476</strain>
    </source>
</reference>
<accession>B4TIX5</accession>
<protein>
    <recommendedName>
        <fullName evidence="1">5-keto-4-deoxy-D-glucarate aldolase</fullName>
        <shortName evidence="1">KDGluc aldolase</shortName>
        <shortName evidence="1">KDGlucA</shortName>
        <ecNumber evidence="1">4.1.2.20</ecNumber>
    </recommendedName>
    <alternativeName>
        <fullName evidence="1">2-dehydro-3-deoxy-D-glucarate aldolase</fullName>
    </alternativeName>
    <alternativeName>
        <fullName evidence="1">2-keto-3-deoxy-D-glucarate aldolase</fullName>
    </alternativeName>
    <alternativeName>
        <fullName evidence="1">5-dehydro-4-deoxy-D-glucarate aldolase</fullName>
    </alternativeName>
    <alternativeName>
        <fullName evidence="1">Alpha-keto-beta-deoxy-D-glucarate aldolase</fullName>
    </alternativeName>
</protein>
<keyword id="KW-0456">Lyase</keyword>
<keyword id="KW-0460">Magnesium</keyword>
<keyword id="KW-0479">Metal-binding</keyword>
<proteinExistence type="inferred from homology"/>